<evidence type="ECO:0000250" key="1"/>
<evidence type="ECO:0000250" key="2">
    <source>
        <dbReference type="UniProtKB" id="Q8TES7"/>
    </source>
</evidence>
<evidence type="ECO:0000255" key="3"/>
<evidence type="ECO:0000256" key="4">
    <source>
        <dbReference type="SAM" id="MobiDB-lite"/>
    </source>
</evidence>
<evidence type="ECO:0000269" key="5">
    <source>
    </source>
</evidence>
<evidence type="ECO:0000303" key="6">
    <source>
    </source>
</evidence>
<evidence type="ECO:0000303" key="7">
    <source>
    </source>
</evidence>
<evidence type="ECO:0000305" key="8"/>
<organism>
    <name type="scientific">Mus musculus</name>
    <name type="common">Mouse</name>
    <dbReference type="NCBI Taxonomy" id="10090"/>
    <lineage>
        <taxon>Eukaryota</taxon>
        <taxon>Metazoa</taxon>
        <taxon>Chordata</taxon>
        <taxon>Craniata</taxon>
        <taxon>Vertebrata</taxon>
        <taxon>Euteleostomi</taxon>
        <taxon>Mammalia</taxon>
        <taxon>Eutheria</taxon>
        <taxon>Euarchontoglires</taxon>
        <taxon>Glires</taxon>
        <taxon>Rodentia</taxon>
        <taxon>Myomorpha</taxon>
        <taxon>Muroidea</taxon>
        <taxon>Muridae</taxon>
        <taxon>Murinae</taxon>
        <taxon>Mus</taxon>
        <taxon>Mus</taxon>
    </lineage>
</organism>
<dbReference type="EMBL" id="AF241249">
    <property type="protein sequence ID" value="AAK28326.1"/>
    <property type="molecule type" value="mRNA"/>
</dbReference>
<dbReference type="EMBL" id="AK031140">
    <property type="protein sequence ID" value="BAC27275.1"/>
    <property type="molecule type" value="mRNA"/>
</dbReference>
<dbReference type="EMBL" id="AL607108">
    <property type="status" value="NOT_ANNOTATED_CDS"/>
    <property type="molecule type" value="Genomic_DNA"/>
</dbReference>
<dbReference type="EMBL" id="BC055689">
    <property type="protein sequence ID" value="AAH55689.1"/>
    <property type="molecule type" value="mRNA"/>
</dbReference>
<dbReference type="EMBL" id="BC137794">
    <property type="protein sequence ID" value="AAI37795.1"/>
    <property type="molecule type" value="mRNA"/>
</dbReference>
<dbReference type="CCDS" id="CCDS25659.1">
    <molecule id="A2A870-1"/>
</dbReference>
<dbReference type="RefSeq" id="NP_001351006.1">
    <molecule id="A2A870-1"/>
    <property type="nucleotide sequence ID" value="NM_001364077.1"/>
</dbReference>
<dbReference type="RefSeq" id="NP_766159.3">
    <molecule id="A2A870-1"/>
    <property type="nucleotide sequence ID" value="NM_172571.3"/>
</dbReference>
<dbReference type="RefSeq" id="XP_006533155.1">
    <molecule id="A2A870-1"/>
    <property type="nucleotide sequence ID" value="XM_006533092.5"/>
</dbReference>
<dbReference type="RefSeq" id="XP_006533156.1">
    <molecule id="A2A870-1"/>
    <property type="nucleotide sequence ID" value="XM_006533093.5"/>
</dbReference>
<dbReference type="RefSeq" id="XP_006533157.1">
    <property type="nucleotide sequence ID" value="XM_006533094.3"/>
</dbReference>
<dbReference type="RefSeq" id="XP_011247250.1">
    <molecule id="A2A870-1"/>
    <property type="nucleotide sequence ID" value="XM_011248948.3"/>
</dbReference>
<dbReference type="RefSeq" id="XP_030101758.1">
    <molecule id="A2A870-1"/>
    <property type="nucleotide sequence ID" value="XM_030245898.2"/>
</dbReference>
<dbReference type="SMR" id="A2A870"/>
<dbReference type="BioGRID" id="229891">
    <property type="interactions" value="8"/>
</dbReference>
<dbReference type="FunCoup" id="A2A870">
    <property type="interactions" value="900"/>
</dbReference>
<dbReference type="IntAct" id="A2A870">
    <property type="interactions" value="2"/>
</dbReference>
<dbReference type="MINT" id="A2A870"/>
<dbReference type="STRING" id="10090.ENSMUSP00000099320"/>
<dbReference type="iPTMnet" id="A2A870"/>
<dbReference type="PhosphoSitePlus" id="A2A870"/>
<dbReference type="PaxDb" id="10090-ENSMUSP00000099320"/>
<dbReference type="ProteomicsDB" id="267576">
    <molecule id="A2A870-1"/>
</dbReference>
<dbReference type="ProteomicsDB" id="267577">
    <molecule id="A2A870-2"/>
</dbReference>
<dbReference type="Pumba" id="A2A870"/>
<dbReference type="Antibodypedia" id="80115">
    <property type="antibodies" value="91 antibodies from 20 providers"/>
</dbReference>
<dbReference type="Ensembl" id="ENSMUST00000103031.8">
    <molecule id="A2A870-1"/>
    <property type="protein sequence ID" value="ENSMUSP00000099320.2"/>
    <property type="gene ID" value="ENSMUSG00000020776.19"/>
</dbReference>
<dbReference type="Ensembl" id="ENSMUST00000106435.9">
    <molecule id="A2A870-1"/>
    <property type="protein sequence ID" value="ENSMUSP00000102043.3"/>
    <property type="gene ID" value="ENSMUSG00000020776.19"/>
</dbReference>
<dbReference type="GeneID" id="217335"/>
<dbReference type="KEGG" id="mmu:217335"/>
<dbReference type="UCSC" id="uc007mkf.1">
    <molecule id="A2A870-2"/>
    <property type="organism name" value="mouse"/>
</dbReference>
<dbReference type="UCSC" id="uc007mkg.2">
    <molecule id="A2A870-1"/>
    <property type="organism name" value="mouse"/>
</dbReference>
<dbReference type="AGR" id="MGI:1922033"/>
<dbReference type="CTD" id="85302"/>
<dbReference type="MGI" id="MGI:1922033">
    <property type="gene designation" value="Fbf1"/>
</dbReference>
<dbReference type="VEuPathDB" id="HostDB:ENSMUSG00000020776"/>
<dbReference type="eggNOG" id="ENOG502QQFR">
    <property type="taxonomic scope" value="Eukaryota"/>
</dbReference>
<dbReference type="GeneTree" id="ENSGT00720000108861"/>
<dbReference type="HOGENOM" id="CLU_008480_0_0_1"/>
<dbReference type="InParanoid" id="A2A870"/>
<dbReference type="OMA" id="SFGHQYR"/>
<dbReference type="OrthoDB" id="8195456at2759"/>
<dbReference type="PhylomeDB" id="A2A870"/>
<dbReference type="TreeFam" id="TF328742"/>
<dbReference type="Reactome" id="R-MMU-5620912">
    <property type="pathway name" value="Anchoring of the basal body to the plasma membrane"/>
</dbReference>
<dbReference type="BioGRID-ORCS" id="217335">
    <property type="hits" value="3 hits in 79 CRISPR screens"/>
</dbReference>
<dbReference type="ChiTaRS" id="Fbf1">
    <property type="organism name" value="mouse"/>
</dbReference>
<dbReference type="PRO" id="PR:A2A870"/>
<dbReference type="Proteomes" id="UP000000589">
    <property type="component" value="Chromosome 11"/>
</dbReference>
<dbReference type="RNAct" id="A2A870">
    <property type="molecule type" value="protein"/>
</dbReference>
<dbReference type="Bgee" id="ENSMUSG00000020776">
    <property type="expression patterns" value="Expressed in dorsal pancreas and 233 other cell types or tissues"/>
</dbReference>
<dbReference type="ExpressionAtlas" id="A2A870">
    <property type="expression patterns" value="baseline and differential"/>
</dbReference>
<dbReference type="GO" id="GO:0043296">
    <property type="term" value="C:apical junction complex"/>
    <property type="evidence" value="ECO:0007669"/>
    <property type="project" value="Ensembl"/>
</dbReference>
<dbReference type="GO" id="GO:0005814">
    <property type="term" value="C:centriole"/>
    <property type="evidence" value="ECO:0000314"/>
    <property type="project" value="MGI"/>
</dbReference>
<dbReference type="GO" id="GO:0005813">
    <property type="term" value="C:centrosome"/>
    <property type="evidence" value="ECO:0007669"/>
    <property type="project" value="Ensembl"/>
</dbReference>
<dbReference type="GO" id="GO:0036064">
    <property type="term" value="C:ciliary basal body"/>
    <property type="evidence" value="ECO:0007669"/>
    <property type="project" value="Ensembl"/>
</dbReference>
<dbReference type="GO" id="GO:0097539">
    <property type="term" value="C:ciliary transition fiber"/>
    <property type="evidence" value="ECO:0000266"/>
    <property type="project" value="MGI"/>
</dbReference>
<dbReference type="GO" id="GO:0005737">
    <property type="term" value="C:cytoplasm"/>
    <property type="evidence" value="ECO:0007669"/>
    <property type="project" value="UniProtKB-KW"/>
</dbReference>
<dbReference type="GO" id="GO:0045095">
    <property type="term" value="C:keratin filament"/>
    <property type="evidence" value="ECO:0007669"/>
    <property type="project" value="Ensembl"/>
</dbReference>
<dbReference type="GO" id="GO:0000922">
    <property type="term" value="C:spindle pole"/>
    <property type="evidence" value="ECO:0000250"/>
    <property type="project" value="UniProtKB"/>
</dbReference>
<dbReference type="GO" id="GO:0043297">
    <property type="term" value="P:apical junction assembly"/>
    <property type="evidence" value="ECO:0000250"/>
    <property type="project" value="UniProtKB"/>
</dbReference>
<dbReference type="GO" id="GO:0060271">
    <property type="term" value="P:cilium assembly"/>
    <property type="evidence" value="ECO:0000250"/>
    <property type="project" value="UniProtKB"/>
</dbReference>
<dbReference type="GO" id="GO:0090162">
    <property type="term" value="P:establishment of epithelial cell polarity"/>
    <property type="evidence" value="ECO:0000250"/>
    <property type="project" value="UniProtKB"/>
</dbReference>
<dbReference type="InterPro" id="IPR033561">
    <property type="entry name" value="FBF1"/>
</dbReference>
<dbReference type="InterPro" id="IPR049390">
    <property type="entry name" value="FBF1_C"/>
</dbReference>
<dbReference type="PANTHER" id="PTHR33689">
    <property type="entry name" value="FAS-BINDING FACTOR 1"/>
    <property type="match status" value="1"/>
</dbReference>
<dbReference type="PANTHER" id="PTHR33689:SF1">
    <property type="entry name" value="FAS-BINDING FACTOR 1"/>
    <property type="match status" value="1"/>
</dbReference>
<dbReference type="Pfam" id="PF21007">
    <property type="entry name" value="FBF1"/>
    <property type="match status" value="1"/>
</dbReference>
<reference key="1">
    <citation type="journal article" date="2000" name="Biochim. Biophys. Acta">
        <title>A novel protein (Fbf-1) that binds to CD95/APO-1/FAS and shows sequence similarity to trichohyalin and plectin.</title>
        <authorList>
            <person name="Schmidt T."/>
            <person name="Karsunky H."/>
            <person name="Frass B."/>
            <person name="Baum W."/>
            <person name="Denzel A."/>
            <person name="Moeroey T."/>
        </authorList>
    </citation>
    <scope>NUCLEOTIDE SEQUENCE [MRNA] (ISOFORM 1)</scope>
    <scope>TISSUE SPECIFICITY</scope>
    <scope>SUBCELLULAR LOCATION</scope>
    <scope>POSSIBLE INTERACTION WITH FAS</scope>
    <source>
        <tissue>Thymus</tissue>
    </source>
</reference>
<reference key="2">
    <citation type="journal article" date="2005" name="Science">
        <title>The transcriptional landscape of the mammalian genome.</title>
        <authorList>
            <person name="Carninci P."/>
            <person name="Kasukawa T."/>
            <person name="Katayama S."/>
            <person name="Gough J."/>
            <person name="Frith M.C."/>
            <person name="Maeda N."/>
            <person name="Oyama R."/>
            <person name="Ravasi T."/>
            <person name="Lenhard B."/>
            <person name="Wells C."/>
            <person name="Kodzius R."/>
            <person name="Shimokawa K."/>
            <person name="Bajic V.B."/>
            <person name="Brenner S.E."/>
            <person name="Batalov S."/>
            <person name="Forrest A.R."/>
            <person name="Zavolan M."/>
            <person name="Davis M.J."/>
            <person name="Wilming L.G."/>
            <person name="Aidinis V."/>
            <person name="Allen J.E."/>
            <person name="Ambesi-Impiombato A."/>
            <person name="Apweiler R."/>
            <person name="Aturaliya R.N."/>
            <person name="Bailey T.L."/>
            <person name="Bansal M."/>
            <person name="Baxter L."/>
            <person name="Beisel K.W."/>
            <person name="Bersano T."/>
            <person name="Bono H."/>
            <person name="Chalk A.M."/>
            <person name="Chiu K.P."/>
            <person name="Choudhary V."/>
            <person name="Christoffels A."/>
            <person name="Clutterbuck D.R."/>
            <person name="Crowe M.L."/>
            <person name="Dalla E."/>
            <person name="Dalrymple B.P."/>
            <person name="de Bono B."/>
            <person name="Della Gatta G."/>
            <person name="di Bernardo D."/>
            <person name="Down T."/>
            <person name="Engstrom P."/>
            <person name="Fagiolini M."/>
            <person name="Faulkner G."/>
            <person name="Fletcher C.F."/>
            <person name="Fukushima T."/>
            <person name="Furuno M."/>
            <person name="Futaki S."/>
            <person name="Gariboldi M."/>
            <person name="Georgii-Hemming P."/>
            <person name="Gingeras T.R."/>
            <person name="Gojobori T."/>
            <person name="Green R.E."/>
            <person name="Gustincich S."/>
            <person name="Harbers M."/>
            <person name="Hayashi Y."/>
            <person name="Hensch T.K."/>
            <person name="Hirokawa N."/>
            <person name="Hill D."/>
            <person name="Huminiecki L."/>
            <person name="Iacono M."/>
            <person name="Ikeo K."/>
            <person name="Iwama A."/>
            <person name="Ishikawa T."/>
            <person name="Jakt M."/>
            <person name="Kanapin A."/>
            <person name="Katoh M."/>
            <person name="Kawasawa Y."/>
            <person name="Kelso J."/>
            <person name="Kitamura H."/>
            <person name="Kitano H."/>
            <person name="Kollias G."/>
            <person name="Krishnan S.P."/>
            <person name="Kruger A."/>
            <person name="Kummerfeld S.K."/>
            <person name="Kurochkin I.V."/>
            <person name="Lareau L.F."/>
            <person name="Lazarevic D."/>
            <person name="Lipovich L."/>
            <person name="Liu J."/>
            <person name="Liuni S."/>
            <person name="McWilliam S."/>
            <person name="Madan Babu M."/>
            <person name="Madera M."/>
            <person name="Marchionni L."/>
            <person name="Matsuda H."/>
            <person name="Matsuzawa S."/>
            <person name="Miki H."/>
            <person name="Mignone F."/>
            <person name="Miyake S."/>
            <person name="Morris K."/>
            <person name="Mottagui-Tabar S."/>
            <person name="Mulder N."/>
            <person name="Nakano N."/>
            <person name="Nakauchi H."/>
            <person name="Ng P."/>
            <person name="Nilsson R."/>
            <person name="Nishiguchi S."/>
            <person name="Nishikawa S."/>
            <person name="Nori F."/>
            <person name="Ohara O."/>
            <person name="Okazaki Y."/>
            <person name="Orlando V."/>
            <person name="Pang K.C."/>
            <person name="Pavan W.J."/>
            <person name="Pavesi G."/>
            <person name="Pesole G."/>
            <person name="Petrovsky N."/>
            <person name="Piazza S."/>
            <person name="Reed J."/>
            <person name="Reid J.F."/>
            <person name="Ring B.Z."/>
            <person name="Ringwald M."/>
            <person name="Rost B."/>
            <person name="Ruan Y."/>
            <person name="Salzberg S.L."/>
            <person name="Sandelin A."/>
            <person name="Schneider C."/>
            <person name="Schoenbach C."/>
            <person name="Sekiguchi K."/>
            <person name="Semple C.A."/>
            <person name="Seno S."/>
            <person name="Sessa L."/>
            <person name="Sheng Y."/>
            <person name="Shibata Y."/>
            <person name="Shimada H."/>
            <person name="Shimada K."/>
            <person name="Silva D."/>
            <person name="Sinclair B."/>
            <person name="Sperling S."/>
            <person name="Stupka E."/>
            <person name="Sugiura K."/>
            <person name="Sultana R."/>
            <person name="Takenaka Y."/>
            <person name="Taki K."/>
            <person name="Tammoja K."/>
            <person name="Tan S.L."/>
            <person name="Tang S."/>
            <person name="Taylor M.S."/>
            <person name="Tegner J."/>
            <person name="Teichmann S.A."/>
            <person name="Ueda H.R."/>
            <person name="van Nimwegen E."/>
            <person name="Verardo R."/>
            <person name="Wei C.L."/>
            <person name="Yagi K."/>
            <person name="Yamanishi H."/>
            <person name="Zabarovsky E."/>
            <person name="Zhu S."/>
            <person name="Zimmer A."/>
            <person name="Hide W."/>
            <person name="Bult C."/>
            <person name="Grimmond S.M."/>
            <person name="Teasdale R.D."/>
            <person name="Liu E.T."/>
            <person name="Brusic V."/>
            <person name="Quackenbush J."/>
            <person name="Wahlestedt C."/>
            <person name="Mattick J.S."/>
            <person name="Hume D.A."/>
            <person name="Kai C."/>
            <person name="Sasaki D."/>
            <person name="Tomaru Y."/>
            <person name="Fukuda S."/>
            <person name="Kanamori-Katayama M."/>
            <person name="Suzuki M."/>
            <person name="Aoki J."/>
            <person name="Arakawa T."/>
            <person name="Iida J."/>
            <person name="Imamura K."/>
            <person name="Itoh M."/>
            <person name="Kato T."/>
            <person name="Kawaji H."/>
            <person name="Kawagashira N."/>
            <person name="Kawashima T."/>
            <person name="Kojima M."/>
            <person name="Kondo S."/>
            <person name="Konno H."/>
            <person name="Nakano K."/>
            <person name="Ninomiya N."/>
            <person name="Nishio T."/>
            <person name="Okada M."/>
            <person name="Plessy C."/>
            <person name="Shibata K."/>
            <person name="Shiraki T."/>
            <person name="Suzuki S."/>
            <person name="Tagami M."/>
            <person name="Waki K."/>
            <person name="Watahiki A."/>
            <person name="Okamura-Oho Y."/>
            <person name="Suzuki H."/>
            <person name="Kawai J."/>
            <person name="Hayashizaki Y."/>
        </authorList>
    </citation>
    <scope>NUCLEOTIDE SEQUENCE [LARGE SCALE MRNA] (ISOFORM 2)</scope>
    <source>
        <strain>C57BL/6J</strain>
        <tissue>Forelimb</tissue>
    </source>
</reference>
<reference key="3">
    <citation type="journal article" date="2009" name="PLoS Biol.">
        <title>Lineage-specific biology revealed by a finished genome assembly of the mouse.</title>
        <authorList>
            <person name="Church D.M."/>
            <person name="Goodstadt L."/>
            <person name="Hillier L.W."/>
            <person name="Zody M.C."/>
            <person name="Goldstein S."/>
            <person name="She X."/>
            <person name="Bult C.J."/>
            <person name="Agarwala R."/>
            <person name="Cherry J.L."/>
            <person name="DiCuccio M."/>
            <person name="Hlavina W."/>
            <person name="Kapustin Y."/>
            <person name="Meric P."/>
            <person name="Maglott D."/>
            <person name="Birtle Z."/>
            <person name="Marques A.C."/>
            <person name="Graves T."/>
            <person name="Zhou S."/>
            <person name="Teague B."/>
            <person name="Potamousis K."/>
            <person name="Churas C."/>
            <person name="Place M."/>
            <person name="Herschleb J."/>
            <person name="Runnheim R."/>
            <person name="Forrest D."/>
            <person name="Amos-Landgraf J."/>
            <person name="Schwartz D.C."/>
            <person name="Cheng Z."/>
            <person name="Lindblad-Toh K."/>
            <person name="Eichler E.E."/>
            <person name="Ponting C.P."/>
        </authorList>
    </citation>
    <scope>NUCLEOTIDE SEQUENCE [LARGE SCALE GENOMIC DNA]</scope>
    <source>
        <strain>C57BL/6J</strain>
    </source>
</reference>
<reference key="4">
    <citation type="journal article" date="2004" name="Genome Res.">
        <title>The status, quality, and expansion of the NIH full-length cDNA project: the Mammalian Gene Collection (MGC).</title>
        <authorList>
            <consortium name="The MGC Project Team"/>
        </authorList>
    </citation>
    <scope>NUCLEOTIDE SEQUENCE [LARGE SCALE MRNA] (ISOFORMS 1 AND 2)</scope>
    <source>
        <strain>C57BL/6J</strain>
        <tissue>Brain</tissue>
    </source>
</reference>
<feature type="chain" id="PRO_0000297647" description="Fas-binding factor 1">
    <location>
        <begin position="1"/>
        <end position="1173"/>
    </location>
</feature>
<feature type="region of interest" description="Disordered" evidence="4">
    <location>
        <begin position="17"/>
        <end position="168"/>
    </location>
</feature>
<feature type="region of interest" description="Disordered" evidence="4">
    <location>
        <begin position="180"/>
        <end position="225"/>
    </location>
</feature>
<feature type="region of interest" description="Disordered" evidence="4">
    <location>
        <begin position="241"/>
        <end position="566"/>
    </location>
</feature>
<feature type="region of interest" description="Disordered" evidence="4">
    <location>
        <begin position="1091"/>
        <end position="1124"/>
    </location>
</feature>
<feature type="coiled-coil region" evidence="3">
    <location>
        <begin position="617"/>
        <end position="742"/>
    </location>
</feature>
<feature type="coiled-coil region" evidence="3">
    <location>
        <begin position="808"/>
        <end position="917"/>
    </location>
</feature>
<feature type="coiled-coil region" evidence="3">
    <location>
        <begin position="975"/>
        <end position="1057"/>
    </location>
</feature>
<feature type="compositionally biased region" description="Basic and acidic residues" evidence="4">
    <location>
        <begin position="46"/>
        <end position="56"/>
    </location>
</feature>
<feature type="compositionally biased region" description="Low complexity" evidence="4">
    <location>
        <begin position="80"/>
        <end position="93"/>
    </location>
</feature>
<feature type="compositionally biased region" description="Low complexity" evidence="4">
    <location>
        <begin position="206"/>
        <end position="216"/>
    </location>
</feature>
<feature type="compositionally biased region" description="Basic and acidic residues" evidence="4">
    <location>
        <begin position="247"/>
        <end position="258"/>
    </location>
</feature>
<feature type="compositionally biased region" description="Basic and acidic residues" evidence="4">
    <location>
        <begin position="287"/>
        <end position="299"/>
    </location>
</feature>
<feature type="compositionally biased region" description="Polar residues" evidence="4">
    <location>
        <begin position="331"/>
        <end position="345"/>
    </location>
</feature>
<feature type="compositionally biased region" description="Polar residues" evidence="4">
    <location>
        <begin position="396"/>
        <end position="411"/>
    </location>
</feature>
<feature type="compositionally biased region" description="Polar residues" evidence="4">
    <location>
        <begin position="468"/>
        <end position="477"/>
    </location>
</feature>
<feature type="compositionally biased region" description="Polar residues" evidence="4">
    <location>
        <begin position="533"/>
        <end position="544"/>
    </location>
</feature>
<feature type="compositionally biased region" description="Low complexity" evidence="4">
    <location>
        <begin position="1110"/>
        <end position="1124"/>
    </location>
</feature>
<feature type="modified residue" description="Phosphoserine" evidence="2">
    <location>
        <position position="172"/>
    </location>
</feature>
<feature type="cross-link" description="Glycyl lysine isopeptide (Lys-Gly) (interchain with G-Cter in SUMO2)" evidence="2">
    <location>
        <position position="1002"/>
    </location>
</feature>
<feature type="splice variant" id="VSP_027324" description="In isoform 2." evidence="6 7">
    <location>
        <begin position="1"/>
        <end position="784"/>
    </location>
</feature>
<feature type="sequence conflict" description="In Ref. 1; AAK28326." evidence="8" ref="1">
    <original>M</original>
    <variation>V</variation>
    <location>
        <position position="17"/>
    </location>
</feature>
<feature type="sequence conflict" description="In Ref. 1; AAK28326." evidence="8" ref="1">
    <original>M</original>
    <variation>I</variation>
    <location>
        <position position="115"/>
    </location>
</feature>
<proteinExistence type="evidence at protein level"/>
<sequence length="1173" mass="130138">MTGQCCEELQRAPKPRMALRTKKGLKGSIEDVLGDLLGDDTTPPEKPAEPASHAKDTASSPQWQASKAKFLPKDSVEGLAGADAEASSVSDADPQVFLQNMKDLDSMDDDLFGRMKSHQPSGKGAAKGPGKEGPSNHKPAGTLTANEKGYTMPTKKPPPSSSKTGLQYKKFSFEDFEDPLAGLLSDEEEETATKLPAVERKPAPKSPGAAAGQGPSVPLTPGDTPIRKKELLFDEGDDIMTTLGFEDSPKAERKKTGDQEGPLPARSKLDELLGRGTAAKLLTRPGTGERREFQLDKKYQKMGGEESVPARDKEDSWDDETLTFGAYKPTVASSEGRQSRRQSVSRFLGEGGPDPKGESLGFKQSSPPASSPIHPRKGGADWLGLKDNDLDLLSPSPVQKAQQEDSPMTPSLLPPTNQPSAPEPQSAPTGLPSAAKPPAKGARPSLKASQASSPKASEEKEDDWLSHVISQKKSQNLAREERAGPPKDLASLGSLGQTPSGSLPVAQVLEQAPAGEASKPTTQGMAAVRPGVTGSSMSWSQATTVLPVDDPKKGAASASGDFSSREPAVYIPHSQEPTGLSVPIQTLLPESMMQSLLPGSGYQKQLLAAQGQLQSSTAQLQVELLQSQTKLSELEAQVRKLELERAQHRMLLESLQQRHQADLELIEDAHRSRIKVLETSYQQREEQLRREKEVLSAQHASYCREAEQARAELVAQHQRQMAMAEQERDQEVARLRELQQASILEMRKDHEHQLQRLKMLKDQEIDAVTSATSHTRSLNGIIEQMEKFSSSLNTLSSRVEASHLTTSQQRELGIRQQDEQLRALQERLGRQQRDMEEERNRLQEVIGKMEVRLSEQSRLLEQERWRVAAEKTKAESAQRTLEEQRKIMVQQIAMEREELERAKSALLEEQKSVMNKCGEERRRLAAEWAEYFTQQKLSKERAEREAERAMHADSQREGTIISLTKEQAELTVRACELRAKEEKLLAEREALERERQELRLEKDRLHKASLRLQARAQEVEHMSKVASKKYEEGEQALQEAQQMQNEQQGRLQVVQRQQEWLRQQEQRVHQEHLSLAQQRLQLDRVRQEVPASLPGLPPRVQGPAASSRDAVQAPASSSPQCSQPAAAQVPTHLLAKLLLLKHTAEEDHDFLENEQFFLETLKKAPYNMAYHSA</sequence>
<keyword id="KW-0025">Alternative splicing</keyword>
<keyword id="KW-0965">Cell junction</keyword>
<keyword id="KW-0970">Cilium biogenesis/degradation</keyword>
<keyword id="KW-0175">Coiled coil</keyword>
<keyword id="KW-0963">Cytoplasm</keyword>
<keyword id="KW-0206">Cytoskeleton</keyword>
<keyword id="KW-1017">Isopeptide bond</keyword>
<keyword id="KW-0597">Phosphoprotein</keyword>
<keyword id="KW-1185">Reference proteome</keyword>
<keyword id="KW-0832">Ubl conjugation</keyword>
<accession>A2A870</accession>
<accession>A2A871</accession>
<accession>B2RQ77</accession>
<accession>Q8BSP0</accession>
<accession>Q99MZ9</accession>
<name>FBF1_MOUSE</name>
<protein>
    <recommendedName>
        <fullName>Fas-binding factor 1</fullName>
        <shortName>FBF-1</shortName>
    </recommendedName>
</protein>
<gene>
    <name type="primary">Fbf1</name>
</gene>
<comment type="function">
    <text evidence="2">Keratin-binding protein required for epithelial cell polarization. Involved in apical junction complex (AJC) assembly via its interaction with PARD3. Required for ciliogenesis (By similarity).</text>
</comment>
<comment type="subunit">
    <text evidence="1 2">Interacts with PARD3 (By similarity). May interact with FAS cytoplasmic domain (By similarity). Interacts with TRAPPC14 (By similarity).</text>
</comment>
<comment type="subcellular location">
    <subcellularLocation>
        <location evidence="1">Cytoplasm</location>
        <location evidence="1">Cytoskeleton</location>
        <location evidence="1">Microtubule organizing center</location>
        <location evidence="1">Centrosome</location>
        <location evidence="1">Centriole</location>
    </subcellularLocation>
    <subcellularLocation>
        <location evidence="5">Cytoplasm</location>
        <location evidence="5">Cytoskeleton</location>
        <location evidence="5">Spindle pole</location>
    </subcellularLocation>
    <subcellularLocation>
        <location evidence="1">Cell junction</location>
    </subcellularLocation>
    <text evidence="1">Localizes specifically to the distal appendage region of the centriole, which anchors the mother centriole to the plasma membrane. Localizes to the apical junction complex (AJC) in epithelial cells (By similarity).</text>
</comment>
<comment type="alternative products">
    <event type="alternative splicing"/>
    <isoform>
        <id>A2A870-1</id>
        <name>1</name>
        <sequence type="displayed"/>
    </isoform>
    <isoform>
        <id>A2A870-2</id>
        <name>2</name>
        <sequence type="described" ref="VSP_027324"/>
    </isoform>
</comment>
<comment type="tissue specificity">
    <text evidence="5">Broadly expressed.</text>
</comment>